<evidence type="ECO:0000250" key="1">
    <source>
        <dbReference type="UniProtKB" id="P03901"/>
    </source>
</evidence>
<evidence type="ECO:0000250" key="2">
    <source>
        <dbReference type="UniProtKB" id="P03902"/>
    </source>
</evidence>
<evidence type="ECO:0000255" key="3"/>
<evidence type="ECO:0000305" key="4"/>
<keyword id="KW-0249">Electron transport</keyword>
<keyword id="KW-0472">Membrane</keyword>
<keyword id="KW-0496">Mitochondrion</keyword>
<keyword id="KW-0999">Mitochondrion inner membrane</keyword>
<keyword id="KW-0520">NAD</keyword>
<keyword id="KW-0679">Respiratory chain</keyword>
<keyword id="KW-1278">Translocase</keyword>
<keyword id="KW-0812">Transmembrane</keyword>
<keyword id="KW-1133">Transmembrane helix</keyword>
<keyword id="KW-0813">Transport</keyword>
<keyword id="KW-0830">Ubiquinone</keyword>
<proteinExistence type="inferred from homology"/>
<protein>
    <recommendedName>
        <fullName>NADH-ubiquinone oxidoreductase chain 4L</fullName>
        <ecNumber>7.1.1.2</ecNumber>
    </recommendedName>
    <alternativeName>
        <fullName>NADH dehydrogenase subunit 4L</fullName>
    </alternativeName>
</protein>
<dbReference type="EC" id="7.1.1.2"/>
<dbReference type="EMBL" id="AB241055">
    <property type="protein sequence ID" value="BAE94001.1"/>
    <property type="molecule type" value="Genomic_DNA"/>
</dbReference>
<dbReference type="RefSeq" id="YP_637044.1">
    <property type="nucleotide sequence ID" value="NC_008135.1"/>
</dbReference>
<dbReference type="SMR" id="Q1MWG5"/>
<dbReference type="GeneID" id="4108123"/>
<dbReference type="CTD" id="4539"/>
<dbReference type="GO" id="GO:0005743">
    <property type="term" value="C:mitochondrial inner membrane"/>
    <property type="evidence" value="ECO:0000250"/>
    <property type="project" value="UniProtKB"/>
</dbReference>
<dbReference type="GO" id="GO:0045271">
    <property type="term" value="C:respiratory chain complex I"/>
    <property type="evidence" value="ECO:0000250"/>
    <property type="project" value="UniProtKB"/>
</dbReference>
<dbReference type="GO" id="GO:0008137">
    <property type="term" value="F:NADH dehydrogenase (ubiquinone) activity"/>
    <property type="evidence" value="ECO:0000250"/>
    <property type="project" value="UniProtKB"/>
</dbReference>
<dbReference type="GO" id="GO:0042773">
    <property type="term" value="P:ATP synthesis coupled electron transport"/>
    <property type="evidence" value="ECO:0007669"/>
    <property type="project" value="InterPro"/>
</dbReference>
<dbReference type="FunFam" id="1.10.287.3510:FF:000002">
    <property type="entry name" value="NADH-ubiquinone oxidoreductase chain 4L"/>
    <property type="match status" value="1"/>
</dbReference>
<dbReference type="Gene3D" id="1.10.287.3510">
    <property type="match status" value="1"/>
</dbReference>
<dbReference type="InterPro" id="IPR001133">
    <property type="entry name" value="NADH_UbQ_OxRdtase_chain4L/K"/>
</dbReference>
<dbReference type="InterPro" id="IPR039428">
    <property type="entry name" value="NUOK/Mnh_C1-like"/>
</dbReference>
<dbReference type="PANTHER" id="PTHR11434:SF0">
    <property type="entry name" value="NADH-UBIQUINONE OXIDOREDUCTASE CHAIN 4L"/>
    <property type="match status" value="1"/>
</dbReference>
<dbReference type="PANTHER" id="PTHR11434">
    <property type="entry name" value="NADH-UBIQUINONE OXIDOREDUCTASE SUBUNIT ND4L"/>
    <property type="match status" value="1"/>
</dbReference>
<dbReference type="Pfam" id="PF00420">
    <property type="entry name" value="Oxidored_q2"/>
    <property type="match status" value="1"/>
</dbReference>
<feature type="chain" id="PRO_0000275087" description="NADH-ubiquinone oxidoreductase chain 4L">
    <location>
        <begin position="1"/>
        <end position="98"/>
    </location>
</feature>
<feature type="transmembrane region" description="Helical" evidence="3">
    <location>
        <begin position="1"/>
        <end position="21"/>
    </location>
</feature>
<feature type="transmembrane region" description="Helical" evidence="3">
    <location>
        <begin position="28"/>
        <end position="48"/>
    </location>
</feature>
<feature type="transmembrane region" description="Helical" evidence="3">
    <location>
        <begin position="59"/>
        <end position="79"/>
    </location>
</feature>
<sequence>MMPISLSLTMAFSLALAGTLIYRSHLMSTLLCLEGMMLSLFILMAMLISHFHMFSMSMAPLILLVFSACEAGIGLALLVKISANYGNDYVQNLNLLKC</sequence>
<comment type="function">
    <text evidence="1">Core subunit of the mitochondrial membrane respiratory chain NADH dehydrogenase (Complex I) which catalyzes electron transfer from NADH through the respiratory chain, using ubiquinone as an electron acceptor. Part of the enzyme membrane arm which is embedded in the lipid bilayer and involved in proton translocation.</text>
</comment>
<comment type="catalytic activity">
    <reaction evidence="1">
        <text>a ubiquinone + NADH + 5 H(+)(in) = a ubiquinol + NAD(+) + 4 H(+)(out)</text>
        <dbReference type="Rhea" id="RHEA:29091"/>
        <dbReference type="Rhea" id="RHEA-COMP:9565"/>
        <dbReference type="Rhea" id="RHEA-COMP:9566"/>
        <dbReference type="ChEBI" id="CHEBI:15378"/>
        <dbReference type="ChEBI" id="CHEBI:16389"/>
        <dbReference type="ChEBI" id="CHEBI:17976"/>
        <dbReference type="ChEBI" id="CHEBI:57540"/>
        <dbReference type="ChEBI" id="CHEBI:57945"/>
        <dbReference type="EC" id="7.1.1.2"/>
    </reaction>
    <physiologicalReaction direction="left-to-right" evidence="1">
        <dbReference type="Rhea" id="RHEA:29092"/>
    </physiologicalReaction>
</comment>
<comment type="subunit">
    <text evidence="2">Core subunit of respiratory chain NADH dehydrogenase (Complex I) which is composed of 45 different subunits.</text>
</comment>
<comment type="subcellular location">
    <subcellularLocation>
        <location evidence="2">Mitochondrion inner membrane</location>
        <topology evidence="3">Multi-pass membrane protein</topology>
    </subcellularLocation>
</comment>
<comment type="similarity">
    <text evidence="4">Belongs to the complex I subunit 4L family.</text>
</comment>
<organism>
    <name type="scientific">Petaurus breviceps</name>
    <name type="common">Australian sugar glider</name>
    <dbReference type="NCBI Taxonomy" id="34899"/>
    <lineage>
        <taxon>Eukaryota</taxon>
        <taxon>Metazoa</taxon>
        <taxon>Chordata</taxon>
        <taxon>Craniata</taxon>
        <taxon>Vertebrata</taxon>
        <taxon>Euteleostomi</taxon>
        <taxon>Mammalia</taxon>
        <taxon>Metatheria</taxon>
        <taxon>Diprotodontia</taxon>
        <taxon>Petauridae</taxon>
        <taxon>Petaurus</taxon>
    </lineage>
</organism>
<name>NU4LM_PETBR</name>
<gene>
    <name type="primary">MT-ND4L</name>
    <name type="synonym">MTND4L</name>
    <name type="synonym">NADH4L</name>
    <name type="synonym">ND4L</name>
</gene>
<geneLocation type="mitochondrion"/>
<reference key="1">
    <citation type="journal article" date="2006" name="Genes Genet. Syst.">
        <title>Phylogenetic analysis of diprotodontian marsupials based on complete mitochondrial genomes.</title>
        <authorList>
            <person name="Munemasa M."/>
            <person name="Nikaido M."/>
            <person name="Donnellan S."/>
            <person name="Austin C.C."/>
            <person name="Okada N."/>
            <person name="Hasegawa M."/>
        </authorList>
    </citation>
    <scope>NUCLEOTIDE SEQUENCE [GENOMIC DNA]</scope>
    <source>
        <tissue>Liver</tissue>
    </source>
</reference>
<accession>Q1MWG5</accession>